<feature type="chain" id="PRO_0000445452" description="Cytochrome P450 monooxygenase bsc2">
    <location>
        <begin position="1"/>
        <end position="525"/>
    </location>
</feature>
<feature type="transmembrane region" description="Helical" evidence="2">
    <location>
        <begin position="12"/>
        <end position="32"/>
    </location>
</feature>
<feature type="binding site" description="axial binding residue" evidence="1">
    <location>
        <position position="456"/>
    </location>
    <ligand>
        <name>heme</name>
        <dbReference type="ChEBI" id="CHEBI:30413"/>
    </ligand>
    <ligandPart>
        <name>Fe</name>
        <dbReference type="ChEBI" id="CHEBI:18248"/>
    </ligandPart>
</feature>
<feature type="glycosylation site" description="N-linked (GlcNAc...) asparagine" evidence="3">
    <location>
        <position position="86"/>
    </location>
</feature>
<feature type="glycosylation site" description="N-linked (GlcNAc...) asparagine" evidence="3">
    <location>
        <position position="317"/>
    </location>
</feature>
<keyword id="KW-0325">Glycoprotein</keyword>
<keyword id="KW-0349">Heme</keyword>
<keyword id="KW-0408">Iron</keyword>
<keyword id="KW-0472">Membrane</keyword>
<keyword id="KW-0479">Metal-binding</keyword>
<keyword id="KW-0503">Monooxygenase</keyword>
<keyword id="KW-0560">Oxidoreductase</keyword>
<keyword id="KW-0812">Transmembrane</keyword>
<keyword id="KW-1133">Transmembrane helix</keyword>
<sequence length="525" mass="59843">MESAQIHSTRDSLFILWLTTLLVSVLATAAYIKFQSRPRPYSGFPLVTLGGPSETDSSHAANWFRRGRALVNKGLSELSGAFQISNGSGYWIILPSKYMDELRNHPDMSLRDALREENFPNYRGFDGFRQAFKDSTFTQEVIRVKVTQSLGLITANLANECQHALQENLGESREWQQRFIIEDILNIVAQLTSRVFLGERLCRDKEWLQITKEYARNSFMGSEELRQCLPLTRPLMQFFMPACTQLRKFSAAARRLIDPEVQARKRRAEEAIKLGKKPPKVEDTIGWMVEVARGRQVDYVGGQLALSIAAIHSSTDNLSKAVVKLCEMPEIVAPLREEITTVLESTDGWSKPALYRMKLLDSFLKEVQRLAPFTIVGMHRRVMKGYVLSDGTHLPKNSRIMVMNDKLRDSSVYEDPDTFKYDRFARLREQPGQEDQHQLASTSSEFATFGHGEHACPGRFFAANQLKIIMACLLLKYDFCFQPGQAEKARVIPFEMVETIDPTLKIEVRRRSEELDVTKVAKETA</sequence>
<evidence type="ECO:0000250" key="1">
    <source>
        <dbReference type="UniProtKB" id="P04798"/>
    </source>
</evidence>
<evidence type="ECO:0000255" key="2"/>
<evidence type="ECO:0000255" key="3">
    <source>
        <dbReference type="PROSITE-ProRule" id="PRU00498"/>
    </source>
</evidence>
<evidence type="ECO:0000269" key="4">
    <source>
    </source>
</evidence>
<evidence type="ECO:0000269" key="5">
    <source>
    </source>
</evidence>
<evidence type="ECO:0000269" key="6">
    <source>
    </source>
</evidence>
<evidence type="ECO:0000303" key="7">
    <source>
    </source>
</evidence>
<evidence type="ECO:0000305" key="8"/>
<evidence type="ECO:0000305" key="9">
    <source>
    </source>
</evidence>
<evidence type="ECO:0000305" key="10">
    <source>
    </source>
</evidence>
<protein>
    <recommendedName>
        <fullName evidence="7">Cytochrome P450 monooxygenase bsc2</fullName>
        <ecNumber evidence="10">1.-.-.-</ecNumber>
    </recommendedName>
    <alternativeName>
        <fullName evidence="7">Brassicicene C biosynthetic gene cluster protein 2</fullName>
    </alternativeName>
</protein>
<accession>D1MX86</accession>
<gene>
    <name evidence="8" type="primary">bsc2</name>
    <name evidence="7" type="synonym">orf2</name>
</gene>
<name>BSC2_ALTBR</name>
<dbReference type="EC" id="1.-.-.-" evidence="10"/>
<dbReference type="EMBL" id="AB506079">
    <property type="protein sequence ID" value="BAI52801.1"/>
    <property type="molecule type" value="mRNA"/>
</dbReference>
<dbReference type="SMR" id="D1MX86"/>
<dbReference type="GlyCosmos" id="D1MX86">
    <property type="glycosylation" value="2 sites, No reported glycans"/>
</dbReference>
<dbReference type="GO" id="GO:0016020">
    <property type="term" value="C:membrane"/>
    <property type="evidence" value="ECO:0007669"/>
    <property type="project" value="UniProtKB-SubCell"/>
</dbReference>
<dbReference type="GO" id="GO:0020037">
    <property type="term" value="F:heme binding"/>
    <property type="evidence" value="ECO:0007669"/>
    <property type="project" value="InterPro"/>
</dbReference>
<dbReference type="GO" id="GO:0005506">
    <property type="term" value="F:iron ion binding"/>
    <property type="evidence" value="ECO:0007669"/>
    <property type="project" value="InterPro"/>
</dbReference>
<dbReference type="GO" id="GO:0004497">
    <property type="term" value="F:monooxygenase activity"/>
    <property type="evidence" value="ECO:0007669"/>
    <property type="project" value="UniProtKB-KW"/>
</dbReference>
<dbReference type="GO" id="GO:0016705">
    <property type="term" value="F:oxidoreductase activity, acting on paired donors, with incorporation or reduction of molecular oxygen"/>
    <property type="evidence" value="ECO:0007669"/>
    <property type="project" value="InterPro"/>
</dbReference>
<dbReference type="GO" id="GO:0019748">
    <property type="term" value="P:secondary metabolic process"/>
    <property type="evidence" value="ECO:0007669"/>
    <property type="project" value="UniProtKB-ARBA"/>
</dbReference>
<dbReference type="CDD" id="cd11041">
    <property type="entry name" value="CYP503A1-like"/>
    <property type="match status" value="1"/>
</dbReference>
<dbReference type="Gene3D" id="1.10.630.10">
    <property type="entry name" value="Cytochrome P450"/>
    <property type="match status" value="1"/>
</dbReference>
<dbReference type="InterPro" id="IPR001128">
    <property type="entry name" value="Cyt_P450"/>
</dbReference>
<dbReference type="InterPro" id="IPR017972">
    <property type="entry name" value="Cyt_P450_CS"/>
</dbReference>
<dbReference type="InterPro" id="IPR002403">
    <property type="entry name" value="Cyt_P450_E_grp-IV"/>
</dbReference>
<dbReference type="InterPro" id="IPR036396">
    <property type="entry name" value="Cyt_P450_sf"/>
</dbReference>
<dbReference type="PANTHER" id="PTHR46206">
    <property type="entry name" value="CYTOCHROME P450"/>
    <property type="match status" value="1"/>
</dbReference>
<dbReference type="PANTHER" id="PTHR46206:SF2">
    <property type="entry name" value="CYTOCHROME P450 MONOOXYGENASE AUSG-RELATED"/>
    <property type="match status" value="1"/>
</dbReference>
<dbReference type="Pfam" id="PF00067">
    <property type="entry name" value="p450"/>
    <property type="match status" value="1"/>
</dbReference>
<dbReference type="PRINTS" id="PR00465">
    <property type="entry name" value="EP450IV"/>
</dbReference>
<dbReference type="SUPFAM" id="SSF48264">
    <property type="entry name" value="Cytochrome P450"/>
    <property type="match status" value="1"/>
</dbReference>
<dbReference type="PROSITE" id="PS00086">
    <property type="entry name" value="CYTOCHROME_P450"/>
    <property type="match status" value="1"/>
</dbReference>
<reference key="1">
    <citation type="journal article" date="2009" name="Bioorg. Med. Chem. Lett.">
        <title>Functional analyses of cytochrome P450 genes responsible for the early steps of brassicicene C biosynthesis.</title>
        <authorList>
            <person name="Hashimoto M."/>
            <person name="Higuchi Y."/>
            <person name="Takahashi S."/>
            <person name="Osada H."/>
            <person name="Sakaki T."/>
            <person name="Toyomasu T."/>
            <person name="Sassa T."/>
            <person name="Kato N."/>
            <person name="Dairi T."/>
        </authorList>
    </citation>
    <scope>NUCLEOTIDE SEQUENCE [MRNA]</scope>
    <scope>FUNCTION</scope>
    <scope>PATHWAY</scope>
    <source>
        <strain>ATCC 96836</strain>
    </source>
</reference>
<reference key="2">
    <citation type="journal article" date="2009" name="Bioorg. Med. Chem. Lett.">
        <title>Identification and functional analysis of brassicicene C biosynthetic gene cluster in Alternaria brassicicola.</title>
        <authorList>
            <person name="Minami A."/>
            <person name="Tajima N."/>
            <person name="Higuchi Y."/>
            <person name="Toyomasu T."/>
            <person name="Sassa T."/>
            <person name="Kato N."/>
            <person name="Dairi T."/>
        </authorList>
    </citation>
    <scope>FUNCTION</scope>
</reference>
<reference key="3">
    <citation type="journal article" date="2011" name="J. Am. Chem. Soc.">
        <title>Dioxygenases, key enzymes to determine the aglycon structures of fusicoccin and brassicicene, diterpene compounds produced by fungi.</title>
        <authorList>
            <person name="Ono Y."/>
            <person name="Minami A."/>
            <person name="Noike M."/>
            <person name="Higuchi Y."/>
            <person name="Toyomasu T."/>
            <person name="Sassa T."/>
            <person name="Kato N."/>
            <person name="Dairi T."/>
        </authorList>
    </citation>
    <scope>FUNCTION</scope>
</reference>
<proteinExistence type="evidence at transcript level"/>
<comment type="function">
    <text evidence="4 5 6 9">Cytochrome P450 monooxygenase; part of the gene cluster that mediates the biosynthesis of the diterpene glucoside brassicicene C (PubMed:19097780). In the first step of the brassicicene C biosynthesis, the bifunctional diterpene synthase bsc8 that possesses both prenyl transferase and terpene cyclase activity, converts isopentenyl diphosphate and dimethylallyl diphosphate into geranylgeranyl diphosphate (GGDP) that is further converted into fusicocca-2,10(14)-diene, the first precursor for brassicicene C (PubMed:19097780). Fusicocca-2,10(14)-diene is then substrate of cytochrome P450 monooxygenase bsc1 for hydroxylation at the C-8 position (PubMed:19700326). Oxidation at C-16 position to aldehyde is then catalyzed by the cytochrome P450 monooyxygenase bsc7, yielding fusicocca-2,10(14)-diene-8-beta,16-diol (PubMed:19700326). Follows the isomerization of the double bond and reduction of aldehyde to alcohol catalyzed by the short-chain dehydrogenase/reductase bsc3 to yield the diol compound fusicocca-1,10(14)-diene-8 beta,16-diol (Probable). The next step is the oxidation at the C-3 position of fusicocca-2,10(14)-diene-8-beta,16-diol catalyzed by the alpha-ketoglutarate dependent dioxygenase bsc9, to produce a triol compound (PubMed:21299202). Methylation of the hydroxy group at position 16 is performed by the methyltransferase bsc6 (PubMed:19097780). 16-O-methylation is followed by oxidation at the C-13 position to ketone and an alkyl shift of the methyl group leads to brassicicene C (Probable). Although the probable acetyltransferase bsc4 is included in the gene cluster, no acetylation reactions are necessary for brassicicene C biosynthesis. However, the fact that brassicicene E, which is a structurally related compound having an acetoxy group at position 12, was previously isolated from another strain of A.brassicicola suggests that the ATCC 96836 strain might also produce a small amount of brassicicene E (Probable).</text>
</comment>
<comment type="cofactor">
    <cofactor evidence="1">
        <name>heme</name>
        <dbReference type="ChEBI" id="CHEBI:30413"/>
    </cofactor>
</comment>
<comment type="pathway">
    <text evidence="10">Mycotoxin biosynthesis.</text>
</comment>
<comment type="subcellular location">
    <subcellularLocation>
        <location evidence="2">Membrane</location>
        <topology evidence="2">Single-pass membrane protein</topology>
    </subcellularLocation>
</comment>
<comment type="similarity">
    <text evidence="8">Belongs to the cytochrome P450 family.</text>
</comment>
<organism>
    <name type="scientific">Alternaria brassicicola</name>
    <name type="common">Dark leaf spot agent</name>
    <dbReference type="NCBI Taxonomy" id="29001"/>
    <lineage>
        <taxon>Eukaryota</taxon>
        <taxon>Fungi</taxon>
        <taxon>Dikarya</taxon>
        <taxon>Ascomycota</taxon>
        <taxon>Pezizomycotina</taxon>
        <taxon>Dothideomycetes</taxon>
        <taxon>Pleosporomycetidae</taxon>
        <taxon>Pleosporales</taxon>
        <taxon>Pleosporineae</taxon>
        <taxon>Pleosporaceae</taxon>
        <taxon>Alternaria</taxon>
        <taxon>Alternaria sect. Brassicicola</taxon>
    </lineage>
</organism>